<feature type="chain" id="PRO_0000277079" description="Small ribosomal subunit protein uS9c">
    <location>
        <begin position="1"/>
        <end position="138"/>
    </location>
</feature>
<gene>
    <name type="primary">rps9</name>
</gene>
<proteinExistence type="inferred from homology"/>
<name>RR9_PHATC</name>
<keyword id="KW-0150">Chloroplast</keyword>
<keyword id="KW-0934">Plastid</keyword>
<keyword id="KW-1185">Reference proteome</keyword>
<keyword id="KW-0687">Ribonucleoprotein</keyword>
<keyword id="KW-0689">Ribosomal protein</keyword>
<reference key="1">
    <citation type="journal article" date="2007" name="Mol. Genet. Genomics">
        <title>Chloroplast genomes of the diatoms Phaeodactylum tricornutum and Thalassiosira pseudonana: comparison with other plastid genomes of the red lineage.</title>
        <authorList>
            <person name="Oudot-Le Secq M.-P."/>
            <person name="Grimwood J."/>
            <person name="Shapiro H."/>
            <person name="Armbrust E.V."/>
            <person name="Bowler C."/>
            <person name="Green B.R."/>
        </authorList>
    </citation>
    <scope>NUCLEOTIDE SEQUENCE [LARGE SCALE GENOMIC DNA]</scope>
    <source>
        <strain>CCAP 1055/1</strain>
    </source>
</reference>
<comment type="subcellular location">
    <subcellularLocation>
        <location>Plastid</location>
        <location>Chloroplast</location>
    </subcellularLocation>
</comment>
<comment type="similarity">
    <text evidence="1">Belongs to the universal ribosomal protein uS9 family.</text>
</comment>
<dbReference type="EMBL" id="EF067920">
    <property type="protein sequence ID" value="ABK20700.1"/>
    <property type="molecule type" value="Genomic_DNA"/>
</dbReference>
<dbReference type="RefSeq" id="YP_874477.1">
    <property type="nucleotide sequence ID" value="NC_008588.1"/>
</dbReference>
<dbReference type="SMR" id="A0T0K2"/>
<dbReference type="STRING" id="556484.A0T0K2"/>
<dbReference type="GeneID" id="4524652"/>
<dbReference type="InParanoid" id="A0T0K2"/>
<dbReference type="Proteomes" id="UP000000759">
    <property type="component" value="Chloroplast"/>
</dbReference>
<dbReference type="GO" id="GO:0009507">
    <property type="term" value="C:chloroplast"/>
    <property type="evidence" value="ECO:0007669"/>
    <property type="project" value="UniProtKB-SubCell"/>
</dbReference>
<dbReference type="GO" id="GO:0015935">
    <property type="term" value="C:small ribosomal subunit"/>
    <property type="evidence" value="ECO:0007669"/>
    <property type="project" value="TreeGrafter"/>
</dbReference>
<dbReference type="GO" id="GO:0003723">
    <property type="term" value="F:RNA binding"/>
    <property type="evidence" value="ECO:0007669"/>
    <property type="project" value="TreeGrafter"/>
</dbReference>
<dbReference type="GO" id="GO:0003735">
    <property type="term" value="F:structural constituent of ribosome"/>
    <property type="evidence" value="ECO:0007669"/>
    <property type="project" value="InterPro"/>
</dbReference>
<dbReference type="GO" id="GO:0006412">
    <property type="term" value="P:translation"/>
    <property type="evidence" value="ECO:0007669"/>
    <property type="project" value="UniProtKB-UniRule"/>
</dbReference>
<dbReference type="FunFam" id="3.30.230.10:FF:000001">
    <property type="entry name" value="30S ribosomal protein S9"/>
    <property type="match status" value="1"/>
</dbReference>
<dbReference type="Gene3D" id="3.30.230.10">
    <property type="match status" value="1"/>
</dbReference>
<dbReference type="HAMAP" id="MF_00532_B">
    <property type="entry name" value="Ribosomal_uS9_B"/>
    <property type="match status" value="1"/>
</dbReference>
<dbReference type="InterPro" id="IPR020568">
    <property type="entry name" value="Ribosomal_Su5_D2-typ_SF"/>
</dbReference>
<dbReference type="InterPro" id="IPR000754">
    <property type="entry name" value="Ribosomal_uS9"/>
</dbReference>
<dbReference type="InterPro" id="IPR023035">
    <property type="entry name" value="Ribosomal_uS9_bac/plastid"/>
</dbReference>
<dbReference type="InterPro" id="IPR020574">
    <property type="entry name" value="Ribosomal_uS9_CS"/>
</dbReference>
<dbReference type="InterPro" id="IPR014721">
    <property type="entry name" value="Ribsml_uS5_D2-typ_fold_subgr"/>
</dbReference>
<dbReference type="NCBIfam" id="NF001099">
    <property type="entry name" value="PRK00132.1"/>
    <property type="match status" value="1"/>
</dbReference>
<dbReference type="PANTHER" id="PTHR21569">
    <property type="entry name" value="RIBOSOMAL PROTEIN S9"/>
    <property type="match status" value="1"/>
</dbReference>
<dbReference type="PANTHER" id="PTHR21569:SF1">
    <property type="entry name" value="SMALL RIBOSOMAL SUBUNIT PROTEIN US9M"/>
    <property type="match status" value="1"/>
</dbReference>
<dbReference type="Pfam" id="PF00380">
    <property type="entry name" value="Ribosomal_S9"/>
    <property type="match status" value="1"/>
</dbReference>
<dbReference type="SUPFAM" id="SSF54211">
    <property type="entry name" value="Ribosomal protein S5 domain 2-like"/>
    <property type="match status" value="1"/>
</dbReference>
<dbReference type="PROSITE" id="PS00360">
    <property type="entry name" value="RIBOSOMAL_S9"/>
    <property type="match status" value="1"/>
</dbReference>
<protein>
    <recommendedName>
        <fullName evidence="1">Small ribosomal subunit protein uS9c</fullName>
    </recommendedName>
    <alternativeName>
        <fullName>30S ribosomal protein S9, chloroplastic</fullName>
    </alternativeName>
</protein>
<sequence length="138" mass="15758">MDSKKELIFKKENIGLGKRKQSIARVFLLPGDGKIIINKTSGNKYLQYNDNYLNTVWSPLEKLNLEKQFDIVALVQGGGLTGQAQAIQLGVARLLCTMDKENRSILKPFGFLTRDSRIKERKKYGLRKARKAPQYSKR</sequence>
<evidence type="ECO:0000305" key="1"/>
<organism>
    <name type="scientific">Phaeodactylum tricornutum (strain CCAP 1055/1)</name>
    <dbReference type="NCBI Taxonomy" id="556484"/>
    <lineage>
        <taxon>Eukaryota</taxon>
        <taxon>Sar</taxon>
        <taxon>Stramenopiles</taxon>
        <taxon>Ochrophyta</taxon>
        <taxon>Bacillariophyta</taxon>
        <taxon>Bacillariophyceae</taxon>
        <taxon>Bacillariophycidae</taxon>
        <taxon>Naviculales</taxon>
        <taxon>Phaeodactylaceae</taxon>
        <taxon>Phaeodactylum</taxon>
    </lineage>
</organism>
<geneLocation type="chloroplast"/>
<accession>A0T0K2</accession>